<accession>B3CPG9</accession>
<gene>
    <name evidence="1" type="primary">recO</name>
    <name type="ordered locus">WP0359</name>
</gene>
<reference key="1">
    <citation type="journal article" date="2008" name="Mol. Biol. Evol.">
        <title>Genome evolution of Wolbachia strain wPip from the Culex pipiens group.</title>
        <authorList>
            <person name="Klasson L."/>
            <person name="Walker T."/>
            <person name="Sebaihia M."/>
            <person name="Sanders M.J."/>
            <person name="Quail M.A."/>
            <person name="Lord A."/>
            <person name="Sanders S."/>
            <person name="Earl J."/>
            <person name="O'Neill S.L."/>
            <person name="Thomson N."/>
            <person name="Sinkins S.P."/>
            <person name="Parkhill J."/>
        </authorList>
    </citation>
    <scope>NUCLEOTIDE SEQUENCE [LARGE SCALE GENOMIC DNA]</scope>
    <source>
        <strain>wPip</strain>
    </source>
</reference>
<evidence type="ECO:0000255" key="1">
    <source>
        <dbReference type="HAMAP-Rule" id="MF_00201"/>
    </source>
</evidence>
<organism>
    <name type="scientific">Wolbachia pipientis subsp. Culex pipiens (strain wPip)</name>
    <dbReference type="NCBI Taxonomy" id="570417"/>
    <lineage>
        <taxon>Bacteria</taxon>
        <taxon>Pseudomonadati</taxon>
        <taxon>Pseudomonadota</taxon>
        <taxon>Alphaproteobacteria</taxon>
        <taxon>Rickettsiales</taxon>
        <taxon>Anaplasmataceae</taxon>
        <taxon>Wolbachieae</taxon>
        <taxon>Wolbachia</taxon>
    </lineage>
</organism>
<dbReference type="EMBL" id="AM999887">
    <property type="protein sequence ID" value="CAQ54467.1"/>
    <property type="molecule type" value="Genomic_DNA"/>
</dbReference>
<dbReference type="RefSeq" id="WP_007302913.1">
    <property type="nucleotide sequence ID" value="NC_010981.1"/>
</dbReference>
<dbReference type="SMR" id="B3CPG9"/>
<dbReference type="KEGG" id="wpi:WP0359"/>
<dbReference type="eggNOG" id="COG1381">
    <property type="taxonomic scope" value="Bacteria"/>
</dbReference>
<dbReference type="HOGENOM" id="CLU_086029_0_0_5"/>
<dbReference type="Proteomes" id="UP000008814">
    <property type="component" value="Chromosome"/>
</dbReference>
<dbReference type="GO" id="GO:0043590">
    <property type="term" value="C:bacterial nucleoid"/>
    <property type="evidence" value="ECO:0007669"/>
    <property type="project" value="TreeGrafter"/>
</dbReference>
<dbReference type="GO" id="GO:0006310">
    <property type="term" value="P:DNA recombination"/>
    <property type="evidence" value="ECO:0007669"/>
    <property type="project" value="UniProtKB-UniRule"/>
</dbReference>
<dbReference type="GO" id="GO:0006302">
    <property type="term" value="P:double-strand break repair"/>
    <property type="evidence" value="ECO:0007669"/>
    <property type="project" value="TreeGrafter"/>
</dbReference>
<dbReference type="Gene3D" id="2.40.50.140">
    <property type="entry name" value="Nucleic acid-binding proteins"/>
    <property type="match status" value="1"/>
</dbReference>
<dbReference type="Gene3D" id="1.20.1440.120">
    <property type="entry name" value="Recombination protein O, C-terminal domain"/>
    <property type="match status" value="1"/>
</dbReference>
<dbReference type="HAMAP" id="MF_00201">
    <property type="entry name" value="RecO"/>
    <property type="match status" value="1"/>
</dbReference>
<dbReference type="InterPro" id="IPR037278">
    <property type="entry name" value="ARFGAP/RecO"/>
</dbReference>
<dbReference type="InterPro" id="IPR022572">
    <property type="entry name" value="DNA_rep/recomb_RecO_N"/>
</dbReference>
<dbReference type="InterPro" id="IPR012340">
    <property type="entry name" value="NA-bd_OB-fold"/>
</dbReference>
<dbReference type="InterPro" id="IPR003717">
    <property type="entry name" value="RecO"/>
</dbReference>
<dbReference type="InterPro" id="IPR042242">
    <property type="entry name" value="RecO_C"/>
</dbReference>
<dbReference type="NCBIfam" id="TIGR00613">
    <property type="entry name" value="reco"/>
    <property type="match status" value="1"/>
</dbReference>
<dbReference type="PANTHER" id="PTHR33991">
    <property type="entry name" value="DNA REPAIR PROTEIN RECO"/>
    <property type="match status" value="1"/>
</dbReference>
<dbReference type="PANTHER" id="PTHR33991:SF1">
    <property type="entry name" value="DNA REPAIR PROTEIN RECO"/>
    <property type="match status" value="1"/>
</dbReference>
<dbReference type="Pfam" id="PF02565">
    <property type="entry name" value="RecO_C"/>
    <property type="match status" value="1"/>
</dbReference>
<dbReference type="Pfam" id="PF11967">
    <property type="entry name" value="RecO_N"/>
    <property type="match status" value="1"/>
</dbReference>
<dbReference type="SUPFAM" id="SSF57863">
    <property type="entry name" value="ArfGap/RecO-like zinc finger"/>
    <property type="match status" value="1"/>
</dbReference>
<feature type="chain" id="PRO_1000193433" description="DNA repair protein RecO">
    <location>
        <begin position="1"/>
        <end position="242"/>
    </location>
</feature>
<name>RECO_WOLPP</name>
<protein>
    <recommendedName>
        <fullName evidence="1">DNA repair protein RecO</fullName>
    </recommendedName>
    <alternativeName>
        <fullName evidence="1">Recombination protein O</fullName>
    </alternativeName>
</protein>
<keyword id="KW-0227">DNA damage</keyword>
<keyword id="KW-0233">DNA recombination</keyword>
<keyword id="KW-0234">DNA repair</keyword>
<proteinExistence type="inferred from homology"/>
<sequence length="242" mass="28233">MRWKDEGVIIAVKKYGDKNLILSLFTKNHGKCRGLTRLTNNSNYKFQISNLLHAEWSAKLPENLGFLKCELIESPFHHFFQDRLKSIAIVSFSSILEKVLPESESCIKLYDNFRHFIDVIKHNSQFWQSHYLNLELLLLTQLGFKLDLSKCAVTGVKENLQFISPKTGRAVSKKVGDCYADKLLPFPQMLHDVYNNNLQNSYSYQEFRLGLKITGYFLNKYLFLQLNAKFPELRNFMLSFES</sequence>
<comment type="function">
    <text evidence="1">Involved in DNA repair and RecF pathway recombination.</text>
</comment>
<comment type="similarity">
    <text evidence="1">Belongs to the RecO family.</text>
</comment>